<comment type="function">
    <text evidence="1">Involved in phosphonate degradation.</text>
</comment>
<comment type="catalytic activity">
    <reaction evidence="1">
        <text>phosphonoacetaldehyde + H2O = acetaldehyde + phosphate + H(+)</text>
        <dbReference type="Rhea" id="RHEA:18905"/>
        <dbReference type="ChEBI" id="CHEBI:15343"/>
        <dbReference type="ChEBI" id="CHEBI:15377"/>
        <dbReference type="ChEBI" id="CHEBI:15378"/>
        <dbReference type="ChEBI" id="CHEBI:43474"/>
        <dbReference type="ChEBI" id="CHEBI:58383"/>
        <dbReference type="EC" id="3.11.1.1"/>
    </reaction>
</comment>
<comment type="cofactor">
    <cofactor evidence="1">
        <name>Mg(2+)</name>
        <dbReference type="ChEBI" id="CHEBI:18420"/>
    </cofactor>
    <text evidence="1">Binds 1 Mg(2+) ion per subunit.</text>
</comment>
<comment type="subunit">
    <text evidence="1">Homodimer.</text>
</comment>
<comment type="similarity">
    <text evidence="1">Belongs to the HAD-like hydrolase superfamily. PhnX family.</text>
</comment>
<accession>A6V8P9</accession>
<organism>
    <name type="scientific">Pseudomonas paraeruginosa (strain DSM 24068 / PA7)</name>
    <name type="common">Pseudomonas aeruginosa (strain PA7)</name>
    <dbReference type="NCBI Taxonomy" id="381754"/>
    <lineage>
        <taxon>Bacteria</taxon>
        <taxon>Pseudomonadati</taxon>
        <taxon>Pseudomonadota</taxon>
        <taxon>Gammaproteobacteria</taxon>
        <taxon>Pseudomonadales</taxon>
        <taxon>Pseudomonadaceae</taxon>
        <taxon>Pseudomonas</taxon>
        <taxon>Pseudomonas paraeruginosa</taxon>
    </lineage>
</organism>
<sequence length="275" mass="29899">MNYNQPATLQAAILDWAGTVVDFGSFAPTQIFVEAFAEFGVQVSLEEARGPMGMGKWDHIRTLCDIPAIAERYRVAFGRLPTDDDVTAIYERFMPLQIEKIAEHSALIPGALQAIAELRGMGLKIGSCSGYPAVVMEKVVALAETNGYVADHVVATDEVPNGRPWPAQALANVIALGIDDVAACVKVDDTWPGILEGRRAGMWTVALTCSGNALGLTYEQYKGLPAAELERERTRIEQMFEGARPHYLVETIAELPAVVRDINARLARGEMPQGN</sequence>
<gene>
    <name evidence="1" type="primary">phnX</name>
    <name type="ordered locus">PSPA7_4080</name>
</gene>
<feature type="chain" id="PRO_1000068239" description="Phosphonoacetaldehyde hydrolase">
    <location>
        <begin position="1"/>
        <end position="275"/>
    </location>
</feature>
<feature type="active site" description="Nucleophile" evidence="1">
    <location>
        <position position="15"/>
    </location>
</feature>
<feature type="active site" description="Schiff-base intermediate with substrate" evidence="1">
    <location>
        <position position="56"/>
    </location>
</feature>
<feature type="binding site" evidence="1">
    <location>
        <position position="15"/>
    </location>
    <ligand>
        <name>Mg(2+)</name>
        <dbReference type="ChEBI" id="CHEBI:18420"/>
    </ligand>
</feature>
<feature type="binding site" evidence="1">
    <location>
        <position position="17"/>
    </location>
    <ligand>
        <name>Mg(2+)</name>
        <dbReference type="ChEBI" id="CHEBI:18420"/>
    </ligand>
</feature>
<feature type="binding site" evidence="1">
    <location>
        <position position="189"/>
    </location>
    <ligand>
        <name>Mg(2+)</name>
        <dbReference type="ChEBI" id="CHEBI:18420"/>
    </ligand>
</feature>
<proteinExistence type="inferred from homology"/>
<keyword id="KW-0378">Hydrolase</keyword>
<keyword id="KW-0460">Magnesium</keyword>
<keyword id="KW-0479">Metal-binding</keyword>
<keyword id="KW-0704">Schiff base</keyword>
<name>PHNX_PSEP7</name>
<dbReference type="EC" id="3.11.1.1" evidence="1"/>
<dbReference type="EMBL" id="CP000744">
    <property type="protein sequence ID" value="ABR84985.1"/>
    <property type="molecule type" value="Genomic_DNA"/>
</dbReference>
<dbReference type="RefSeq" id="WP_012076569.1">
    <property type="nucleotide sequence ID" value="NC_009656.1"/>
</dbReference>
<dbReference type="SMR" id="A6V8P9"/>
<dbReference type="KEGG" id="pap:PSPA7_4080"/>
<dbReference type="HOGENOM" id="CLU_045011_12_0_6"/>
<dbReference type="Proteomes" id="UP000001582">
    <property type="component" value="Chromosome"/>
</dbReference>
<dbReference type="GO" id="GO:0005829">
    <property type="term" value="C:cytosol"/>
    <property type="evidence" value="ECO:0007669"/>
    <property type="project" value="TreeGrafter"/>
</dbReference>
<dbReference type="GO" id="GO:0000287">
    <property type="term" value="F:magnesium ion binding"/>
    <property type="evidence" value="ECO:0007669"/>
    <property type="project" value="UniProtKB-UniRule"/>
</dbReference>
<dbReference type="GO" id="GO:0008967">
    <property type="term" value="F:phosphoglycolate phosphatase activity"/>
    <property type="evidence" value="ECO:0007669"/>
    <property type="project" value="TreeGrafter"/>
</dbReference>
<dbReference type="GO" id="GO:0050194">
    <property type="term" value="F:phosphonoacetaldehyde hydrolase activity"/>
    <property type="evidence" value="ECO:0007669"/>
    <property type="project" value="UniProtKB-UniRule"/>
</dbReference>
<dbReference type="GO" id="GO:0006281">
    <property type="term" value="P:DNA repair"/>
    <property type="evidence" value="ECO:0007669"/>
    <property type="project" value="TreeGrafter"/>
</dbReference>
<dbReference type="GO" id="GO:0019700">
    <property type="term" value="P:organic phosphonate catabolic process"/>
    <property type="evidence" value="ECO:0007669"/>
    <property type="project" value="InterPro"/>
</dbReference>
<dbReference type="CDD" id="cd02586">
    <property type="entry name" value="HAD_PHN"/>
    <property type="match status" value="1"/>
</dbReference>
<dbReference type="FunFam" id="1.10.150.240:FF:000006">
    <property type="entry name" value="Phosphonoacetaldehyde hydrolase"/>
    <property type="match status" value="1"/>
</dbReference>
<dbReference type="Gene3D" id="3.40.50.1000">
    <property type="entry name" value="HAD superfamily/HAD-like"/>
    <property type="match status" value="1"/>
</dbReference>
<dbReference type="Gene3D" id="1.10.150.240">
    <property type="entry name" value="Putative phosphatase, domain 2"/>
    <property type="match status" value="1"/>
</dbReference>
<dbReference type="HAMAP" id="MF_01375">
    <property type="entry name" value="PhnX"/>
    <property type="match status" value="1"/>
</dbReference>
<dbReference type="InterPro" id="IPR050155">
    <property type="entry name" value="HAD-like_hydrolase_sf"/>
</dbReference>
<dbReference type="InterPro" id="IPR036412">
    <property type="entry name" value="HAD-like_sf"/>
</dbReference>
<dbReference type="InterPro" id="IPR006439">
    <property type="entry name" value="HAD-SF_hydro_IA"/>
</dbReference>
<dbReference type="InterPro" id="IPR023214">
    <property type="entry name" value="HAD_sf"/>
</dbReference>
<dbReference type="InterPro" id="IPR023198">
    <property type="entry name" value="PGP-like_dom2"/>
</dbReference>
<dbReference type="InterPro" id="IPR006323">
    <property type="entry name" value="Phosphonoacetald_hydro"/>
</dbReference>
<dbReference type="NCBIfam" id="TIGR01509">
    <property type="entry name" value="HAD-SF-IA-v3"/>
    <property type="match status" value="1"/>
</dbReference>
<dbReference type="NCBIfam" id="TIGR01422">
    <property type="entry name" value="phosphonatase"/>
    <property type="match status" value="1"/>
</dbReference>
<dbReference type="PANTHER" id="PTHR43434">
    <property type="entry name" value="PHOSPHOGLYCOLATE PHOSPHATASE"/>
    <property type="match status" value="1"/>
</dbReference>
<dbReference type="PANTHER" id="PTHR43434:SF19">
    <property type="entry name" value="PHOSPHONOACETALDEHYDE HYDROLASE"/>
    <property type="match status" value="1"/>
</dbReference>
<dbReference type="Pfam" id="PF00702">
    <property type="entry name" value="Hydrolase"/>
    <property type="match status" value="1"/>
</dbReference>
<dbReference type="SFLD" id="SFLDS00003">
    <property type="entry name" value="Haloacid_Dehalogenase"/>
    <property type="match status" value="1"/>
</dbReference>
<dbReference type="SFLD" id="SFLDF00038">
    <property type="entry name" value="phosphonoacetaldehyde_hydrolas"/>
    <property type="match status" value="1"/>
</dbReference>
<dbReference type="SUPFAM" id="SSF56784">
    <property type="entry name" value="HAD-like"/>
    <property type="match status" value="1"/>
</dbReference>
<evidence type="ECO:0000255" key="1">
    <source>
        <dbReference type="HAMAP-Rule" id="MF_01375"/>
    </source>
</evidence>
<reference key="1">
    <citation type="submission" date="2007-06" db="EMBL/GenBank/DDBJ databases">
        <authorList>
            <person name="Dodson R.J."/>
            <person name="Harkins D."/>
            <person name="Paulsen I.T."/>
        </authorList>
    </citation>
    <scope>NUCLEOTIDE SEQUENCE [LARGE SCALE GENOMIC DNA]</scope>
    <source>
        <strain>DSM 24068 / PA7</strain>
    </source>
</reference>
<protein>
    <recommendedName>
        <fullName evidence="1">Phosphonoacetaldehyde hydrolase</fullName>
        <shortName evidence="1">Phosphonatase</shortName>
        <ecNumber evidence="1">3.11.1.1</ecNumber>
    </recommendedName>
    <alternativeName>
        <fullName evidence="1">Phosphonoacetaldehyde phosphonohydrolase</fullName>
    </alternativeName>
</protein>